<keyword id="KW-0963">Cytoplasm</keyword>
<keyword id="KW-0903">Direct protein sequencing</keyword>
<keyword id="KW-1017">Isopeptide bond</keyword>
<keyword id="KW-0539">Nucleus</keyword>
<keyword id="KW-0687">Ribonucleoprotein</keyword>
<keyword id="KW-0689">Ribosomal protein</keyword>
<keyword id="KW-0832">Ubl conjugation</keyword>
<evidence type="ECO:0000250" key="1"/>
<evidence type="ECO:0000255" key="2">
    <source>
        <dbReference type="PROSITE-ProRule" id="PRU00214"/>
    </source>
</evidence>
<evidence type="ECO:0000305" key="3"/>
<accession>P0CH11</accession>
<accession>P14624</accession>
<accession>P14695</accession>
<feature type="chain" id="PRO_0000114837" description="Ubiquitin">
    <location>
        <begin position="1"/>
        <end position="76"/>
    </location>
</feature>
<feature type="chain" id="PRO_0000138761" description="Large ribosomal subunit protein eL40z">
    <location>
        <begin position="77"/>
        <end position="128"/>
    </location>
</feature>
<feature type="domain" description="Ubiquitin-like" evidence="2">
    <location>
        <begin position="1"/>
        <end position="76"/>
    </location>
</feature>
<feature type="cross-link" description="Glycyl lysine isopeptide (Lys-Gly) (interchain with G-Cter in ubiquitin)">
    <location>
        <position position="48"/>
    </location>
</feature>
<feature type="cross-link" description="Glycyl lysine isopeptide (Gly-Lys) (interchain with K-? in acceptor proteins)" evidence="2">
    <location>
        <position position="76"/>
    </location>
</feature>
<reference key="1">
    <citation type="journal article" date="1989" name="Nucleic Acids Res.">
        <title>Sequence of a cDNA from Chlamydomonas reinhardii encoding a ubiquitin 52 amino acid extension protein.</title>
        <authorList>
            <person name="Callis J."/>
            <person name="Pollmann L."/>
            <person name="Shanklin J."/>
            <person name="Wettern M."/>
            <person name="Vierstra R."/>
        </authorList>
    </citation>
    <scope>NUCLEOTIDE SEQUENCE [MRNA]</scope>
    <source>
        <strain>2137</strain>
    </source>
</reference>
<reference key="2">
    <citation type="journal article" date="1992" name="Arch. Biochem. Biophys.">
        <title>Purification of Chlamydomonas 28-kDa ubiquitinated protein and its identification as ubiquitinated histone H2B.</title>
        <authorList>
            <person name="Shimogawara K."/>
            <person name="Muto S."/>
        </authorList>
    </citation>
    <scope>PROTEIN SEQUENCE OF 1-70 AND 75-76</scope>
    <source>
        <strain>cw15</strain>
    </source>
</reference>
<organism>
    <name type="scientific">Chlamydomonas reinhardtii</name>
    <name type="common">Chlamydomonas smithii</name>
    <dbReference type="NCBI Taxonomy" id="3055"/>
    <lineage>
        <taxon>Eukaryota</taxon>
        <taxon>Viridiplantae</taxon>
        <taxon>Chlorophyta</taxon>
        <taxon>core chlorophytes</taxon>
        <taxon>Chlorophyceae</taxon>
        <taxon>CS clade</taxon>
        <taxon>Chlamydomonadales</taxon>
        <taxon>Chlamydomonadaceae</taxon>
        <taxon>Chlamydomonas</taxon>
    </lineage>
</organism>
<sequence length="128" mass="14700">MQIFVKTLTGKTITLEVESSDTIENVKAKIQDKEGIPPDQQRLIFAGKQLEDGRTLADYNIQKESTLHLVLRLRGGIIEPSLQALARKYNQEKMICRKCYARLHPRAKNCRKKSCGHTNQLRPKKKLK</sequence>
<protein>
    <recommendedName>
        <fullName evidence="3">Ubiquitin-ribosomal protein eL40z fusion protein</fullName>
    </recommendedName>
    <component>
        <recommendedName>
            <fullName>Ubiquitin</fullName>
        </recommendedName>
    </component>
    <component>
        <recommendedName>
            <fullName evidence="3">Large ribosomal subunit protein eL40z</fullName>
        </recommendedName>
        <alternativeName>
            <fullName>60S ribosomal protein L40</fullName>
        </alternativeName>
        <alternativeName>
            <fullName>CEP52</fullName>
        </alternativeName>
    </component>
</protein>
<dbReference type="EMBL" id="X15427">
    <property type="protein sequence ID" value="CAA33466.1"/>
    <property type="molecule type" value="mRNA"/>
</dbReference>
<dbReference type="PIR" id="S06598">
    <property type="entry name" value="UQKM"/>
</dbReference>
<dbReference type="RefSeq" id="XP_001700313.1">
    <property type="nucleotide sequence ID" value="XM_001700261.1"/>
</dbReference>
<dbReference type="SMR" id="P0CH11"/>
<dbReference type="PaxDb" id="3055-EDO98280"/>
<dbReference type="EnsemblPlants" id="PNW87921">
    <property type="protein sequence ID" value="PNW87921"/>
    <property type="gene ID" value="CHLRE_01g007051v5"/>
</dbReference>
<dbReference type="Gramene" id="PNW87921">
    <property type="protein sequence ID" value="PNW87921"/>
    <property type="gene ID" value="CHLRE_01g007051v5"/>
</dbReference>
<dbReference type="KEGG" id="cre:CHLRE_01g007051v5"/>
<dbReference type="eggNOG" id="KOG0003">
    <property type="taxonomic scope" value="Eukaryota"/>
</dbReference>
<dbReference type="HOGENOM" id="CLU_010412_3_4_1"/>
<dbReference type="OMA" id="CGRCSQL"/>
<dbReference type="OrthoDB" id="472at2759"/>
<dbReference type="GO" id="GO:0005737">
    <property type="term" value="C:cytoplasm"/>
    <property type="evidence" value="ECO:0007669"/>
    <property type="project" value="UniProtKB-SubCell"/>
</dbReference>
<dbReference type="GO" id="GO:0005634">
    <property type="term" value="C:nucleus"/>
    <property type="evidence" value="ECO:0007669"/>
    <property type="project" value="UniProtKB-SubCell"/>
</dbReference>
<dbReference type="GO" id="GO:1990904">
    <property type="term" value="C:ribonucleoprotein complex"/>
    <property type="evidence" value="ECO:0007669"/>
    <property type="project" value="UniProtKB-KW"/>
</dbReference>
<dbReference type="GO" id="GO:0005840">
    <property type="term" value="C:ribosome"/>
    <property type="evidence" value="ECO:0007669"/>
    <property type="project" value="UniProtKB-KW"/>
</dbReference>
<dbReference type="GO" id="GO:0003729">
    <property type="term" value="F:mRNA binding"/>
    <property type="evidence" value="ECO:0007669"/>
    <property type="project" value="UniProtKB-ARBA"/>
</dbReference>
<dbReference type="GO" id="GO:0003735">
    <property type="term" value="F:structural constituent of ribosome"/>
    <property type="evidence" value="ECO:0007669"/>
    <property type="project" value="InterPro"/>
</dbReference>
<dbReference type="GO" id="GO:0006412">
    <property type="term" value="P:translation"/>
    <property type="evidence" value="ECO:0007669"/>
    <property type="project" value="InterPro"/>
</dbReference>
<dbReference type="CDD" id="cd01803">
    <property type="entry name" value="Ubl_ubiquitin"/>
    <property type="match status" value="1"/>
</dbReference>
<dbReference type="FunFam" id="3.10.20.90:FF:000014">
    <property type="entry name" value="Ubiquitin-60S ribosomal L40 fusion"/>
    <property type="match status" value="1"/>
</dbReference>
<dbReference type="FunFam" id="4.10.1060.50:FF:000001">
    <property type="entry name" value="ubiquitin-60S ribosomal protein L40"/>
    <property type="match status" value="1"/>
</dbReference>
<dbReference type="Gene3D" id="4.10.1060.50">
    <property type="match status" value="1"/>
</dbReference>
<dbReference type="Gene3D" id="3.10.20.90">
    <property type="entry name" value="Phosphatidylinositol 3-kinase Catalytic Subunit, Chain A, domain 1"/>
    <property type="match status" value="1"/>
</dbReference>
<dbReference type="InterPro" id="IPR001975">
    <property type="entry name" value="Ribosomal_eL40_dom"/>
</dbReference>
<dbReference type="InterPro" id="IPR038587">
    <property type="entry name" value="Ribosomal_eL40_sf"/>
</dbReference>
<dbReference type="InterPro" id="IPR000626">
    <property type="entry name" value="Ubiquitin-like_dom"/>
</dbReference>
<dbReference type="InterPro" id="IPR029071">
    <property type="entry name" value="Ubiquitin-like_domsf"/>
</dbReference>
<dbReference type="InterPro" id="IPR019954">
    <property type="entry name" value="Ubiquitin_CS"/>
</dbReference>
<dbReference type="InterPro" id="IPR019956">
    <property type="entry name" value="Ubiquitin_dom"/>
</dbReference>
<dbReference type="InterPro" id="IPR050158">
    <property type="entry name" value="Ubiquitin_ubiquitin-like"/>
</dbReference>
<dbReference type="PANTHER" id="PTHR10666">
    <property type="entry name" value="UBIQUITIN"/>
    <property type="match status" value="1"/>
</dbReference>
<dbReference type="Pfam" id="PF01020">
    <property type="entry name" value="Ribosomal_L40e"/>
    <property type="match status" value="1"/>
</dbReference>
<dbReference type="Pfam" id="PF00240">
    <property type="entry name" value="ubiquitin"/>
    <property type="match status" value="1"/>
</dbReference>
<dbReference type="PRINTS" id="PR00348">
    <property type="entry name" value="UBIQUITIN"/>
</dbReference>
<dbReference type="SMART" id="SM01377">
    <property type="entry name" value="Ribosomal_L40e"/>
    <property type="match status" value="1"/>
</dbReference>
<dbReference type="SMART" id="SM00213">
    <property type="entry name" value="UBQ"/>
    <property type="match status" value="1"/>
</dbReference>
<dbReference type="SUPFAM" id="SSF54236">
    <property type="entry name" value="Ubiquitin-like"/>
    <property type="match status" value="1"/>
</dbReference>
<dbReference type="PROSITE" id="PS00299">
    <property type="entry name" value="UBIQUITIN_1"/>
    <property type="match status" value="1"/>
</dbReference>
<dbReference type="PROSITE" id="PS50053">
    <property type="entry name" value="UBIQUITIN_2"/>
    <property type="match status" value="1"/>
</dbReference>
<gene>
    <name type="primary">UBI1</name>
</gene>
<name>RL401_CHLRE</name>
<comment type="function">
    <molecule>Ubiquitin</molecule>
    <text evidence="1">Exists either covalently attached to another protein, or free (unanchored). When covalently bound, it is conjugated to target proteins via an isopeptide bond either as a monomer (monoubiquitin), a polymer linked via different Lys residues of the ubiquitin (polyubiquitin chains) or a linear polymer linked via the initiator Met of the ubiquitin (linear polyubiquitin chains). Polyubiquitin chains, when attached to a target protein, have different functions depending on the Lys residue of the ubiquitin that is linked: Lys-48-linked is involved in protein degradation via the proteasome. Linear polymer chains formed via attachment by the initiator Met lead to cell signaling. Ubiquitin is usually conjugated to Lys residues of target proteins, however, in rare cases, conjugation to Cys or Ser residues has been observed. When polyubiquitin is free (unanchored-polyubiquitin), it also has distinct roles, such as in activation of protein kinases, and in signaling (By similarity).</text>
</comment>
<comment type="function">
    <molecule>Large ribosomal subunit protein eL40z</molecule>
    <text>Component of the 60S subunit of the ribosome.</text>
</comment>
<comment type="subunit">
    <molecule>Large ribosomal subunit protein eL40z</molecule>
    <text evidence="1">Part of the 60S ribosomal subunit.</text>
</comment>
<comment type="subcellular location">
    <molecule>Ubiquitin</molecule>
    <subcellularLocation>
        <location evidence="1">Cytoplasm</location>
    </subcellularLocation>
    <subcellularLocation>
        <location evidence="1">Nucleus</location>
    </subcellularLocation>
</comment>
<comment type="subcellular location">
    <molecule>Large ribosomal subunit protein eL40z</molecule>
    <subcellularLocation>
        <location evidence="1">Cytoplasm</location>
    </subcellularLocation>
</comment>
<comment type="similarity">
    <text evidence="3">In the N-terminal section; belongs to the ubiquitin family.</text>
</comment>
<comment type="similarity">
    <text evidence="3">In the C-terminal section; belongs to the eukaryotic ribosomal protein eL40 family.</text>
</comment>
<proteinExistence type="evidence at protein level"/>